<feature type="chain" id="PRO_0000313314" description="DNA ligase">
    <location>
        <begin position="1"/>
        <end position="701"/>
    </location>
</feature>
<feature type="domain" description="BRCT" evidence="1">
    <location>
        <begin position="616"/>
        <end position="701"/>
    </location>
</feature>
<feature type="region of interest" description="Disordered" evidence="2">
    <location>
        <begin position="1"/>
        <end position="21"/>
    </location>
</feature>
<feature type="active site" description="N6-AMP-lysine intermediate" evidence="1">
    <location>
        <position position="132"/>
    </location>
</feature>
<feature type="binding site" evidence="1">
    <location>
        <begin position="50"/>
        <end position="54"/>
    </location>
    <ligand>
        <name>NAD(+)</name>
        <dbReference type="ChEBI" id="CHEBI:57540"/>
    </ligand>
</feature>
<feature type="binding site" evidence="1">
    <location>
        <begin position="100"/>
        <end position="101"/>
    </location>
    <ligand>
        <name>NAD(+)</name>
        <dbReference type="ChEBI" id="CHEBI:57540"/>
    </ligand>
</feature>
<feature type="binding site" evidence="1">
    <location>
        <position position="130"/>
    </location>
    <ligand>
        <name>NAD(+)</name>
        <dbReference type="ChEBI" id="CHEBI:57540"/>
    </ligand>
</feature>
<feature type="binding site" evidence="1">
    <location>
        <position position="153"/>
    </location>
    <ligand>
        <name>NAD(+)</name>
        <dbReference type="ChEBI" id="CHEBI:57540"/>
    </ligand>
</feature>
<feature type="binding site" evidence="1">
    <location>
        <position position="193"/>
    </location>
    <ligand>
        <name>NAD(+)</name>
        <dbReference type="ChEBI" id="CHEBI:57540"/>
    </ligand>
</feature>
<feature type="binding site" evidence="1">
    <location>
        <position position="309"/>
    </location>
    <ligand>
        <name>NAD(+)</name>
        <dbReference type="ChEBI" id="CHEBI:57540"/>
    </ligand>
</feature>
<feature type="binding site" evidence="1">
    <location>
        <position position="333"/>
    </location>
    <ligand>
        <name>NAD(+)</name>
        <dbReference type="ChEBI" id="CHEBI:57540"/>
    </ligand>
</feature>
<feature type="binding site" evidence="1">
    <location>
        <position position="427"/>
    </location>
    <ligand>
        <name>Zn(2+)</name>
        <dbReference type="ChEBI" id="CHEBI:29105"/>
    </ligand>
</feature>
<feature type="binding site" evidence="1">
    <location>
        <position position="430"/>
    </location>
    <ligand>
        <name>Zn(2+)</name>
        <dbReference type="ChEBI" id="CHEBI:29105"/>
    </ligand>
</feature>
<feature type="binding site" evidence="1">
    <location>
        <position position="446"/>
    </location>
    <ligand>
        <name>Zn(2+)</name>
        <dbReference type="ChEBI" id="CHEBI:29105"/>
    </ligand>
</feature>
<feature type="binding site" evidence="1">
    <location>
        <position position="452"/>
    </location>
    <ligand>
        <name>Zn(2+)</name>
        <dbReference type="ChEBI" id="CHEBI:29105"/>
    </ligand>
</feature>
<dbReference type="EC" id="6.5.1.2" evidence="1"/>
<dbReference type="EMBL" id="CP000518">
    <property type="protein sequence ID" value="ABL91126.1"/>
    <property type="molecule type" value="Genomic_DNA"/>
</dbReference>
<dbReference type="SMR" id="A1UE68"/>
<dbReference type="STRING" id="189918.Mkms_1927"/>
<dbReference type="KEGG" id="mkm:Mkms_1927"/>
<dbReference type="HOGENOM" id="CLU_007764_2_0_11"/>
<dbReference type="OrthoDB" id="9759736at2"/>
<dbReference type="GO" id="GO:0005829">
    <property type="term" value="C:cytosol"/>
    <property type="evidence" value="ECO:0007669"/>
    <property type="project" value="TreeGrafter"/>
</dbReference>
<dbReference type="GO" id="GO:0003911">
    <property type="term" value="F:DNA ligase (NAD+) activity"/>
    <property type="evidence" value="ECO:0007669"/>
    <property type="project" value="UniProtKB-UniRule"/>
</dbReference>
<dbReference type="GO" id="GO:0046872">
    <property type="term" value="F:metal ion binding"/>
    <property type="evidence" value="ECO:0007669"/>
    <property type="project" value="UniProtKB-KW"/>
</dbReference>
<dbReference type="GO" id="GO:0006281">
    <property type="term" value="P:DNA repair"/>
    <property type="evidence" value="ECO:0007669"/>
    <property type="project" value="UniProtKB-KW"/>
</dbReference>
<dbReference type="GO" id="GO:0006260">
    <property type="term" value="P:DNA replication"/>
    <property type="evidence" value="ECO:0007669"/>
    <property type="project" value="UniProtKB-KW"/>
</dbReference>
<dbReference type="CDD" id="cd17748">
    <property type="entry name" value="BRCT_DNA_ligase_like"/>
    <property type="match status" value="1"/>
</dbReference>
<dbReference type="CDD" id="cd00114">
    <property type="entry name" value="LIGANc"/>
    <property type="match status" value="1"/>
</dbReference>
<dbReference type="FunFam" id="1.10.150.20:FF:000006">
    <property type="entry name" value="DNA ligase"/>
    <property type="match status" value="1"/>
</dbReference>
<dbReference type="FunFam" id="1.10.287.610:FF:000002">
    <property type="entry name" value="DNA ligase"/>
    <property type="match status" value="1"/>
</dbReference>
<dbReference type="FunFam" id="2.40.50.140:FF:000012">
    <property type="entry name" value="DNA ligase"/>
    <property type="match status" value="1"/>
</dbReference>
<dbReference type="FunFam" id="3.30.470.30:FF:000001">
    <property type="entry name" value="DNA ligase"/>
    <property type="match status" value="1"/>
</dbReference>
<dbReference type="FunFam" id="3.40.50.10190:FF:000054">
    <property type="entry name" value="DNA ligase"/>
    <property type="match status" value="1"/>
</dbReference>
<dbReference type="Gene3D" id="6.20.10.30">
    <property type="match status" value="1"/>
</dbReference>
<dbReference type="Gene3D" id="1.10.150.20">
    <property type="entry name" value="5' to 3' exonuclease, C-terminal subdomain"/>
    <property type="match status" value="2"/>
</dbReference>
<dbReference type="Gene3D" id="3.40.50.10190">
    <property type="entry name" value="BRCT domain"/>
    <property type="match status" value="1"/>
</dbReference>
<dbReference type="Gene3D" id="3.30.470.30">
    <property type="entry name" value="DNA ligase/mRNA capping enzyme"/>
    <property type="match status" value="1"/>
</dbReference>
<dbReference type="Gene3D" id="1.10.287.610">
    <property type="entry name" value="Helix hairpin bin"/>
    <property type="match status" value="1"/>
</dbReference>
<dbReference type="Gene3D" id="2.40.50.140">
    <property type="entry name" value="Nucleic acid-binding proteins"/>
    <property type="match status" value="1"/>
</dbReference>
<dbReference type="HAMAP" id="MF_01588">
    <property type="entry name" value="DNA_ligase_A"/>
    <property type="match status" value="1"/>
</dbReference>
<dbReference type="InterPro" id="IPR001357">
    <property type="entry name" value="BRCT_dom"/>
</dbReference>
<dbReference type="InterPro" id="IPR036420">
    <property type="entry name" value="BRCT_dom_sf"/>
</dbReference>
<dbReference type="InterPro" id="IPR041663">
    <property type="entry name" value="DisA/LigA_HHH"/>
</dbReference>
<dbReference type="InterPro" id="IPR001679">
    <property type="entry name" value="DNA_ligase"/>
</dbReference>
<dbReference type="InterPro" id="IPR018239">
    <property type="entry name" value="DNA_ligase_AS"/>
</dbReference>
<dbReference type="InterPro" id="IPR033136">
    <property type="entry name" value="DNA_ligase_CS"/>
</dbReference>
<dbReference type="InterPro" id="IPR013839">
    <property type="entry name" value="DNAligase_adenylation"/>
</dbReference>
<dbReference type="InterPro" id="IPR013840">
    <property type="entry name" value="DNAligase_N"/>
</dbReference>
<dbReference type="InterPro" id="IPR012340">
    <property type="entry name" value="NA-bd_OB-fold"/>
</dbReference>
<dbReference type="InterPro" id="IPR004150">
    <property type="entry name" value="NAD_DNA_ligase_OB"/>
</dbReference>
<dbReference type="InterPro" id="IPR010994">
    <property type="entry name" value="RuvA_2-like"/>
</dbReference>
<dbReference type="InterPro" id="IPR004149">
    <property type="entry name" value="Znf_DNAligase_C4"/>
</dbReference>
<dbReference type="NCBIfam" id="TIGR00575">
    <property type="entry name" value="dnlj"/>
    <property type="match status" value="1"/>
</dbReference>
<dbReference type="NCBIfam" id="NF005932">
    <property type="entry name" value="PRK07956.1"/>
    <property type="match status" value="1"/>
</dbReference>
<dbReference type="PANTHER" id="PTHR23389">
    <property type="entry name" value="CHROMOSOME TRANSMISSION FIDELITY FACTOR 18"/>
    <property type="match status" value="1"/>
</dbReference>
<dbReference type="PANTHER" id="PTHR23389:SF9">
    <property type="entry name" value="DNA LIGASE"/>
    <property type="match status" value="1"/>
</dbReference>
<dbReference type="Pfam" id="PF00533">
    <property type="entry name" value="BRCT"/>
    <property type="match status" value="1"/>
</dbReference>
<dbReference type="Pfam" id="PF01653">
    <property type="entry name" value="DNA_ligase_aden"/>
    <property type="match status" value="1"/>
</dbReference>
<dbReference type="Pfam" id="PF03120">
    <property type="entry name" value="DNA_ligase_OB"/>
    <property type="match status" value="1"/>
</dbReference>
<dbReference type="Pfam" id="PF03119">
    <property type="entry name" value="DNA_ligase_ZBD"/>
    <property type="match status" value="1"/>
</dbReference>
<dbReference type="Pfam" id="PF12826">
    <property type="entry name" value="HHH_2"/>
    <property type="match status" value="1"/>
</dbReference>
<dbReference type="Pfam" id="PF22745">
    <property type="entry name" value="Nlig-Ia"/>
    <property type="match status" value="1"/>
</dbReference>
<dbReference type="PIRSF" id="PIRSF001604">
    <property type="entry name" value="LigA"/>
    <property type="match status" value="1"/>
</dbReference>
<dbReference type="SMART" id="SM00292">
    <property type="entry name" value="BRCT"/>
    <property type="match status" value="1"/>
</dbReference>
<dbReference type="SMART" id="SM00532">
    <property type="entry name" value="LIGANc"/>
    <property type="match status" value="1"/>
</dbReference>
<dbReference type="SUPFAM" id="SSF52113">
    <property type="entry name" value="BRCT domain"/>
    <property type="match status" value="1"/>
</dbReference>
<dbReference type="SUPFAM" id="SSF56091">
    <property type="entry name" value="DNA ligase/mRNA capping enzyme, catalytic domain"/>
    <property type="match status" value="1"/>
</dbReference>
<dbReference type="SUPFAM" id="SSF50249">
    <property type="entry name" value="Nucleic acid-binding proteins"/>
    <property type="match status" value="1"/>
</dbReference>
<dbReference type="SUPFAM" id="SSF47781">
    <property type="entry name" value="RuvA domain 2-like"/>
    <property type="match status" value="1"/>
</dbReference>
<dbReference type="PROSITE" id="PS50172">
    <property type="entry name" value="BRCT"/>
    <property type="match status" value="1"/>
</dbReference>
<dbReference type="PROSITE" id="PS01055">
    <property type="entry name" value="DNA_LIGASE_N1"/>
    <property type="match status" value="1"/>
</dbReference>
<dbReference type="PROSITE" id="PS01056">
    <property type="entry name" value="DNA_LIGASE_N2"/>
    <property type="match status" value="1"/>
</dbReference>
<sequence>MSAKSTPDAGPQEQATEAEAELRHRWQALADEVRDHQFRYYVRDAPVISDADFDKLFQQLEALEAEHPELRAPDSPTQLVGGAGFATDFTPAEHLERMLSLDDVFNVDELTAWSSRVRAEVGDDAAYLCELKVDGLALALVYRDGRLERAATRGDGRVGEDVTLNARTLDDVPERLTPSDEFPHPAVLEVRGEVFFRVADFEALNAGLVAEGKPPFANPRNSAAGSLRQKNPAVTARRPLRMVCHGIGYTEGFSPTSLHEAYGALRAWGLPVSDHTTRVQGMDAVRERIAYWGEHRHDIEHEIDGVVVKLDQIALQRRLGATSRAPRWAVAYKYPPEEAQTKLLDIRVNVGRTGRVTPFAYMEPVKVAGSTVGLATLHNASEVKRKGVLIGDTVVIRKAGDVIPEVLGPVVDLRDGTEREFVMPTHCPECGTELAPAKEGDADIRCPNSRTCPAQLRERVFHVAGRGAFDIEGLGYEAAIALLQAGVITDEGDLFTLTEDDLLRTELFTTKGGAVSANGRRLLANLGKAKAQPLWRVLVALSIRHVGPTAARALATEFGSLDAIIEASEDQLAAVEGVGPTIAAAVKEWFTVDWHCAIVEKWRAAGVRMADERDASIARTLEGLSIVVTGSLAGFSRDEAKEAIIARGGKAAGSVSKKTAYVVAGDSPGSKYDKAIDLGVPVLDEDGFRNLLENGPQAPEG</sequence>
<gene>
    <name evidence="1" type="primary">ligA</name>
    <name type="ordered locus">Mkms_1927</name>
</gene>
<name>DNLJ_MYCSK</name>
<comment type="function">
    <text evidence="1">DNA ligase that catalyzes the formation of phosphodiester linkages between 5'-phosphoryl and 3'-hydroxyl groups in double-stranded DNA using NAD as a coenzyme and as the energy source for the reaction. It is essential for DNA replication and repair of damaged DNA.</text>
</comment>
<comment type="catalytic activity">
    <reaction evidence="1">
        <text>NAD(+) + (deoxyribonucleotide)n-3'-hydroxyl + 5'-phospho-(deoxyribonucleotide)m = (deoxyribonucleotide)n+m + AMP + beta-nicotinamide D-nucleotide.</text>
        <dbReference type="EC" id="6.5.1.2"/>
    </reaction>
</comment>
<comment type="cofactor">
    <cofactor evidence="1">
        <name>Mg(2+)</name>
        <dbReference type="ChEBI" id="CHEBI:18420"/>
    </cofactor>
    <cofactor evidence="1">
        <name>Mn(2+)</name>
        <dbReference type="ChEBI" id="CHEBI:29035"/>
    </cofactor>
</comment>
<comment type="similarity">
    <text evidence="1">Belongs to the NAD-dependent DNA ligase family. LigA subfamily.</text>
</comment>
<keyword id="KW-0227">DNA damage</keyword>
<keyword id="KW-0234">DNA repair</keyword>
<keyword id="KW-0235">DNA replication</keyword>
<keyword id="KW-0436">Ligase</keyword>
<keyword id="KW-0460">Magnesium</keyword>
<keyword id="KW-0464">Manganese</keyword>
<keyword id="KW-0479">Metal-binding</keyword>
<keyword id="KW-0520">NAD</keyword>
<keyword id="KW-0862">Zinc</keyword>
<organism>
    <name type="scientific">Mycobacterium sp. (strain KMS)</name>
    <dbReference type="NCBI Taxonomy" id="189918"/>
    <lineage>
        <taxon>Bacteria</taxon>
        <taxon>Bacillati</taxon>
        <taxon>Actinomycetota</taxon>
        <taxon>Actinomycetes</taxon>
        <taxon>Mycobacteriales</taxon>
        <taxon>Mycobacteriaceae</taxon>
        <taxon>Mycobacterium</taxon>
    </lineage>
</organism>
<proteinExistence type="inferred from homology"/>
<evidence type="ECO:0000255" key="1">
    <source>
        <dbReference type="HAMAP-Rule" id="MF_01588"/>
    </source>
</evidence>
<evidence type="ECO:0000256" key="2">
    <source>
        <dbReference type="SAM" id="MobiDB-lite"/>
    </source>
</evidence>
<protein>
    <recommendedName>
        <fullName evidence="1">DNA ligase</fullName>
        <ecNumber evidence="1">6.5.1.2</ecNumber>
    </recommendedName>
    <alternativeName>
        <fullName evidence="1">Polydeoxyribonucleotide synthase [NAD(+)]</fullName>
    </alternativeName>
</protein>
<accession>A1UE68</accession>
<reference key="1">
    <citation type="submission" date="2006-12" db="EMBL/GenBank/DDBJ databases">
        <title>Complete sequence of chromosome of Mycobacterium sp. KMS.</title>
        <authorList>
            <consortium name="US DOE Joint Genome Institute"/>
            <person name="Copeland A."/>
            <person name="Lucas S."/>
            <person name="Lapidus A."/>
            <person name="Barry K."/>
            <person name="Detter J.C."/>
            <person name="Glavina del Rio T."/>
            <person name="Hammon N."/>
            <person name="Israni S."/>
            <person name="Dalin E."/>
            <person name="Tice H."/>
            <person name="Pitluck S."/>
            <person name="Kiss H."/>
            <person name="Brettin T."/>
            <person name="Bruce D."/>
            <person name="Han C."/>
            <person name="Tapia R."/>
            <person name="Gilna P."/>
            <person name="Schmutz J."/>
            <person name="Larimer F."/>
            <person name="Land M."/>
            <person name="Hauser L."/>
            <person name="Kyrpides N."/>
            <person name="Mikhailova N."/>
            <person name="Miller C.D."/>
            <person name="Richardson P."/>
        </authorList>
    </citation>
    <scope>NUCLEOTIDE SEQUENCE [LARGE SCALE GENOMIC DNA]</scope>
    <source>
        <strain>KMS</strain>
    </source>
</reference>